<comment type="subcellular location">
    <subcellularLocation>
        <location evidence="2">Cell membrane</location>
        <topology evidence="2">Multi-pass membrane protein</topology>
    </subcellularLocation>
</comment>
<keyword id="KW-1003">Cell membrane</keyword>
<keyword id="KW-0472">Membrane</keyword>
<keyword id="KW-1185">Reference proteome</keyword>
<keyword id="KW-0812">Transmembrane</keyword>
<keyword id="KW-1133">Transmembrane helix</keyword>
<organism>
    <name type="scientific">Bacillus subtilis (strain 168)</name>
    <dbReference type="NCBI Taxonomy" id="224308"/>
    <lineage>
        <taxon>Bacteria</taxon>
        <taxon>Bacillati</taxon>
        <taxon>Bacillota</taxon>
        <taxon>Bacilli</taxon>
        <taxon>Bacillales</taxon>
        <taxon>Bacillaceae</taxon>
        <taxon>Bacillus</taxon>
    </lineage>
</organism>
<dbReference type="EMBL" id="X99339">
    <property type="protein sequence ID" value="CAA67715.1"/>
    <property type="molecule type" value="Genomic_DNA"/>
</dbReference>
<dbReference type="EMBL" id="D83026">
    <property type="protein sequence ID" value="BAA11715.1"/>
    <property type="molecule type" value="Genomic_DNA"/>
</dbReference>
<dbReference type="EMBL" id="AL009126">
    <property type="protein sequence ID" value="CAB15915.1"/>
    <property type="molecule type" value="Genomic_DNA"/>
</dbReference>
<dbReference type="PIR" id="C70080">
    <property type="entry name" value="C70080"/>
</dbReference>
<dbReference type="RefSeq" id="NP_391768.1">
    <property type="nucleotide sequence ID" value="NC_000964.3"/>
</dbReference>
<dbReference type="RefSeq" id="WP_003243313.1">
    <property type="nucleotide sequence ID" value="NZ_OZ025638.1"/>
</dbReference>
<dbReference type="FunCoup" id="P55182">
    <property type="interactions" value="123"/>
</dbReference>
<dbReference type="STRING" id="224308.BSU38890"/>
<dbReference type="PaxDb" id="224308-BSU38890"/>
<dbReference type="EnsemblBacteria" id="CAB15915">
    <property type="protein sequence ID" value="CAB15915"/>
    <property type="gene ID" value="BSU_38890"/>
</dbReference>
<dbReference type="GeneID" id="937424"/>
<dbReference type="KEGG" id="bsu:BSU38890"/>
<dbReference type="PATRIC" id="fig|224308.179.peg.4208"/>
<dbReference type="eggNOG" id="ENOG502ZSI3">
    <property type="taxonomic scope" value="Bacteria"/>
</dbReference>
<dbReference type="InParanoid" id="P55182"/>
<dbReference type="OrthoDB" id="2936130at2"/>
<dbReference type="BioCyc" id="BSUB:BSU38890-MONOMER"/>
<dbReference type="Proteomes" id="UP000001570">
    <property type="component" value="Chromosome"/>
</dbReference>
<dbReference type="GO" id="GO:0005886">
    <property type="term" value="C:plasma membrane"/>
    <property type="evidence" value="ECO:0007669"/>
    <property type="project" value="UniProtKB-SubCell"/>
</dbReference>
<proteinExistence type="predicted"/>
<evidence type="ECO:0000255" key="1"/>
<evidence type="ECO:0000305" key="2"/>
<name>YXJN_BACSU</name>
<reference key="1">
    <citation type="journal article" date="1996" name="FEMS Microbiol. Lett.">
        <title>Expression of a pepT homologue from Bacillus subtilis.</title>
        <authorList>
            <person name="Schroegel O."/>
            <person name="Krispin O."/>
            <person name="Allmansberger R."/>
        </authorList>
    </citation>
    <scope>NUCLEOTIDE SEQUENCE [GENOMIC DNA]</scope>
    <source>
        <strain>168</strain>
    </source>
</reference>
<reference key="2">
    <citation type="journal article" date="1996" name="Microbiology">
        <title>Sequencing of a 65 kb region of the Bacillus subtilis genome containing the lic and cel loci, and creation of a 177 kb contig covering the gnt-sacXY region.</title>
        <authorList>
            <person name="Yoshida K."/>
            <person name="Shindo K."/>
            <person name="Sano H."/>
            <person name="Seki S."/>
            <person name="Fujimura M."/>
            <person name="Yanai N."/>
            <person name="Miwa Y."/>
            <person name="Fujita Y."/>
        </authorList>
    </citation>
    <scope>NUCLEOTIDE SEQUENCE [GENOMIC DNA]</scope>
    <source>
        <strain>168 / BGSC1A1</strain>
    </source>
</reference>
<reference key="3">
    <citation type="journal article" date="1997" name="Nature">
        <title>The complete genome sequence of the Gram-positive bacterium Bacillus subtilis.</title>
        <authorList>
            <person name="Kunst F."/>
            <person name="Ogasawara N."/>
            <person name="Moszer I."/>
            <person name="Albertini A.M."/>
            <person name="Alloni G."/>
            <person name="Azevedo V."/>
            <person name="Bertero M.G."/>
            <person name="Bessieres P."/>
            <person name="Bolotin A."/>
            <person name="Borchert S."/>
            <person name="Borriss R."/>
            <person name="Boursier L."/>
            <person name="Brans A."/>
            <person name="Braun M."/>
            <person name="Brignell S.C."/>
            <person name="Bron S."/>
            <person name="Brouillet S."/>
            <person name="Bruschi C.V."/>
            <person name="Caldwell B."/>
            <person name="Capuano V."/>
            <person name="Carter N.M."/>
            <person name="Choi S.-K."/>
            <person name="Codani J.-J."/>
            <person name="Connerton I.F."/>
            <person name="Cummings N.J."/>
            <person name="Daniel R.A."/>
            <person name="Denizot F."/>
            <person name="Devine K.M."/>
            <person name="Duesterhoeft A."/>
            <person name="Ehrlich S.D."/>
            <person name="Emmerson P.T."/>
            <person name="Entian K.-D."/>
            <person name="Errington J."/>
            <person name="Fabret C."/>
            <person name="Ferrari E."/>
            <person name="Foulger D."/>
            <person name="Fritz C."/>
            <person name="Fujita M."/>
            <person name="Fujita Y."/>
            <person name="Fuma S."/>
            <person name="Galizzi A."/>
            <person name="Galleron N."/>
            <person name="Ghim S.-Y."/>
            <person name="Glaser P."/>
            <person name="Goffeau A."/>
            <person name="Golightly E.J."/>
            <person name="Grandi G."/>
            <person name="Guiseppi G."/>
            <person name="Guy B.J."/>
            <person name="Haga K."/>
            <person name="Haiech J."/>
            <person name="Harwood C.R."/>
            <person name="Henaut A."/>
            <person name="Hilbert H."/>
            <person name="Holsappel S."/>
            <person name="Hosono S."/>
            <person name="Hullo M.-F."/>
            <person name="Itaya M."/>
            <person name="Jones L.-M."/>
            <person name="Joris B."/>
            <person name="Karamata D."/>
            <person name="Kasahara Y."/>
            <person name="Klaerr-Blanchard M."/>
            <person name="Klein C."/>
            <person name="Kobayashi Y."/>
            <person name="Koetter P."/>
            <person name="Koningstein G."/>
            <person name="Krogh S."/>
            <person name="Kumano M."/>
            <person name="Kurita K."/>
            <person name="Lapidus A."/>
            <person name="Lardinois S."/>
            <person name="Lauber J."/>
            <person name="Lazarevic V."/>
            <person name="Lee S.-M."/>
            <person name="Levine A."/>
            <person name="Liu H."/>
            <person name="Masuda S."/>
            <person name="Mauel C."/>
            <person name="Medigue C."/>
            <person name="Medina N."/>
            <person name="Mellado R.P."/>
            <person name="Mizuno M."/>
            <person name="Moestl D."/>
            <person name="Nakai S."/>
            <person name="Noback M."/>
            <person name="Noone D."/>
            <person name="O'Reilly M."/>
            <person name="Ogawa K."/>
            <person name="Ogiwara A."/>
            <person name="Oudega B."/>
            <person name="Park S.-H."/>
            <person name="Parro V."/>
            <person name="Pohl T.M."/>
            <person name="Portetelle D."/>
            <person name="Porwollik S."/>
            <person name="Prescott A.M."/>
            <person name="Presecan E."/>
            <person name="Pujic P."/>
            <person name="Purnelle B."/>
            <person name="Rapoport G."/>
            <person name="Rey M."/>
            <person name="Reynolds S."/>
            <person name="Rieger M."/>
            <person name="Rivolta C."/>
            <person name="Rocha E."/>
            <person name="Roche B."/>
            <person name="Rose M."/>
            <person name="Sadaie Y."/>
            <person name="Sato T."/>
            <person name="Scanlan E."/>
            <person name="Schleich S."/>
            <person name="Schroeter R."/>
            <person name="Scoffone F."/>
            <person name="Sekiguchi J."/>
            <person name="Sekowska A."/>
            <person name="Seror S.J."/>
            <person name="Serror P."/>
            <person name="Shin B.-S."/>
            <person name="Soldo B."/>
            <person name="Sorokin A."/>
            <person name="Tacconi E."/>
            <person name="Takagi T."/>
            <person name="Takahashi H."/>
            <person name="Takemaru K."/>
            <person name="Takeuchi M."/>
            <person name="Tamakoshi A."/>
            <person name="Tanaka T."/>
            <person name="Terpstra P."/>
            <person name="Tognoni A."/>
            <person name="Tosato V."/>
            <person name="Uchiyama S."/>
            <person name="Vandenbol M."/>
            <person name="Vannier F."/>
            <person name="Vassarotti A."/>
            <person name="Viari A."/>
            <person name="Wambutt R."/>
            <person name="Wedler E."/>
            <person name="Wedler H."/>
            <person name="Weitzenegger T."/>
            <person name="Winters P."/>
            <person name="Wipat A."/>
            <person name="Yamamoto H."/>
            <person name="Yamane K."/>
            <person name="Yasumoto K."/>
            <person name="Yata K."/>
            <person name="Yoshida K."/>
            <person name="Yoshikawa H.-F."/>
            <person name="Zumstein E."/>
            <person name="Yoshikawa H."/>
            <person name="Danchin A."/>
        </authorList>
    </citation>
    <scope>NUCLEOTIDE SEQUENCE [LARGE SCALE GENOMIC DNA]</scope>
    <source>
        <strain>168</strain>
    </source>
</reference>
<gene>
    <name type="primary">yxjN</name>
    <name type="ordered locus">BSU38890</name>
</gene>
<sequence>MAMSPYIFIVLILIILSMYRERTVKPGKLLIIPLLLLWGVSASFQPAYFHSVLHVAISGILLLIGLACGFGIGKMVNVRIHPETGKVTSRGSLGSVILILVILSLRMAARTWLPESNEMFIAIIHSMFFVPLGTITARNIMLYKAYRRLTAGKVSIQ</sequence>
<accession>P55182</accession>
<protein>
    <recommendedName>
        <fullName>Uncharacterized protein YxjN</fullName>
    </recommendedName>
</protein>
<feature type="chain" id="PRO_0000050038" description="Uncharacterized protein YxjN">
    <location>
        <begin position="1"/>
        <end position="157"/>
    </location>
</feature>
<feature type="transmembrane region" description="Helical" evidence="1">
    <location>
        <begin position="29"/>
        <end position="49"/>
    </location>
</feature>
<feature type="transmembrane region" description="Helical" evidence="1">
    <location>
        <begin position="52"/>
        <end position="72"/>
    </location>
</feature>
<feature type="transmembrane region" description="Helical" evidence="1">
    <location>
        <begin position="93"/>
        <end position="113"/>
    </location>
</feature>
<feature type="transmembrane region" description="Helical" evidence="1">
    <location>
        <begin position="117"/>
        <end position="137"/>
    </location>
</feature>